<protein>
    <recommendedName>
        <fullName evidence="7">Beta-glucosidase 43</fullName>
        <shortName evidence="7">AtBGLU43</shortName>
        <ecNumber evidence="1">3.2.1.21</ecNumber>
    </recommendedName>
</protein>
<keyword id="KW-0025">Alternative splicing</keyword>
<keyword id="KW-1015">Disulfide bond</keyword>
<keyword id="KW-0325">Glycoprotein</keyword>
<keyword id="KW-0326">Glycosidase</keyword>
<keyword id="KW-0378">Hydrolase</keyword>
<keyword id="KW-1185">Reference proteome</keyword>
<keyword id="KW-0732">Signal</keyword>
<name>BGL43_ARATH</name>
<comment type="catalytic activity">
    <reaction evidence="1">
        <text>Hydrolysis of terminal, non-reducing beta-D-glucosyl residues with release of beta-D-glucose.</text>
        <dbReference type="EC" id="3.2.1.21"/>
    </reaction>
</comment>
<comment type="alternative products">
    <event type="alternative splicing"/>
    <isoform>
        <id>Q9LV34-1</id>
        <name>1</name>
        <sequence type="displayed"/>
    </isoform>
    <isoform>
        <id>Q9LV34-2</id>
        <name>2</name>
        <sequence type="described" ref="VSP_038500"/>
    </isoform>
</comment>
<comment type="similarity">
    <text evidence="9">Belongs to the glycosyl hydrolase 1 family.</text>
</comment>
<comment type="sequence caution" evidence="9">
    <conflict type="erroneous gene model prediction">
        <sequence resource="EMBL-CDS" id="BAB02019"/>
    </conflict>
</comment>
<accession>Q9LV34</accession>
<accession>Q1PEP7</accession>
<feature type="signal peptide" evidence="5">
    <location>
        <begin position="1"/>
        <end position="14"/>
    </location>
</feature>
<feature type="chain" id="PRO_0000390316" description="Beta-glucosidase 43">
    <location>
        <begin position="15"/>
        <end position="501"/>
    </location>
</feature>
<feature type="active site" description="Proton donor" evidence="3">
    <location>
        <position position="194"/>
    </location>
</feature>
<feature type="active site" description="Nucleophile" evidence="3">
    <location>
        <position position="408"/>
    </location>
</feature>
<feature type="binding site" evidence="3">
    <location>
        <position position="49"/>
    </location>
    <ligand>
        <name>a beta-D-glucoside</name>
        <dbReference type="ChEBI" id="CHEBI:22798"/>
    </ligand>
</feature>
<feature type="binding site" evidence="3">
    <location>
        <position position="150"/>
    </location>
    <ligand>
        <name>a beta-D-glucoside</name>
        <dbReference type="ChEBI" id="CHEBI:22798"/>
    </ligand>
</feature>
<feature type="binding site" evidence="3">
    <location>
        <begin position="193"/>
        <end position="194"/>
    </location>
    <ligand>
        <name>a beta-D-glucoside</name>
        <dbReference type="ChEBI" id="CHEBI:22798"/>
    </ligand>
</feature>
<feature type="binding site" evidence="3">
    <location>
        <position position="336"/>
    </location>
    <ligand>
        <name>a beta-D-glucoside</name>
        <dbReference type="ChEBI" id="CHEBI:22798"/>
    </ligand>
</feature>
<feature type="binding site" evidence="4">
    <location>
        <position position="408"/>
    </location>
    <ligand>
        <name>a beta-D-glucoside</name>
        <dbReference type="ChEBI" id="CHEBI:22798"/>
    </ligand>
</feature>
<feature type="binding site" evidence="3">
    <location>
        <position position="455"/>
    </location>
    <ligand>
        <name>a beta-D-glucoside</name>
        <dbReference type="ChEBI" id="CHEBI:22798"/>
    </ligand>
</feature>
<feature type="binding site" evidence="3">
    <location>
        <begin position="462"/>
        <end position="463"/>
    </location>
    <ligand>
        <name>a beta-D-glucoside</name>
        <dbReference type="ChEBI" id="CHEBI:22798"/>
    </ligand>
</feature>
<feature type="binding site" evidence="2">
    <location>
        <position position="471"/>
    </location>
    <ligand>
        <name>a beta-D-glucoside</name>
        <dbReference type="ChEBI" id="CHEBI:22798"/>
    </ligand>
</feature>
<feature type="glycosylation site" description="N-linked (GlcNAc...) asparagine" evidence="6">
    <location>
        <position position="77"/>
    </location>
</feature>
<feature type="glycosylation site" description="N-linked (GlcNAc...) asparagine" evidence="6">
    <location>
        <position position="219"/>
    </location>
</feature>
<feature type="glycosylation site" description="N-linked (GlcNAc...) asparagine" evidence="6">
    <location>
        <position position="360"/>
    </location>
</feature>
<feature type="glycosylation site" description="N-linked (GlcNAc...) asparagine" evidence="6">
    <location>
        <position position="416"/>
    </location>
</feature>
<feature type="glycosylation site" description="N-linked (GlcNAc...) asparagine" evidence="6">
    <location>
        <position position="424"/>
    </location>
</feature>
<feature type="glycosylation site" description="N-linked (GlcNAc...) asparagine" evidence="6">
    <location>
        <position position="448"/>
    </location>
</feature>
<feature type="disulfide bond" evidence="3">
    <location>
        <begin position="213"/>
        <end position="220"/>
    </location>
</feature>
<feature type="splice variant" id="VSP_038500" description="In isoform 2." evidence="8">
    <location>
        <begin position="92"/>
        <end position="168"/>
    </location>
</feature>
<organism>
    <name type="scientific">Arabidopsis thaliana</name>
    <name type="common">Mouse-ear cress</name>
    <dbReference type="NCBI Taxonomy" id="3702"/>
    <lineage>
        <taxon>Eukaryota</taxon>
        <taxon>Viridiplantae</taxon>
        <taxon>Streptophyta</taxon>
        <taxon>Embryophyta</taxon>
        <taxon>Tracheophyta</taxon>
        <taxon>Spermatophyta</taxon>
        <taxon>Magnoliopsida</taxon>
        <taxon>eudicotyledons</taxon>
        <taxon>Gunneridae</taxon>
        <taxon>Pentapetalae</taxon>
        <taxon>rosids</taxon>
        <taxon>malvids</taxon>
        <taxon>Brassicales</taxon>
        <taxon>Brassicaceae</taxon>
        <taxon>Camelineae</taxon>
        <taxon>Arabidopsis</taxon>
    </lineage>
</organism>
<evidence type="ECO:0000250" key="1">
    <source>
        <dbReference type="UniProtKB" id="O64879"/>
    </source>
</evidence>
<evidence type="ECO:0000250" key="2">
    <source>
        <dbReference type="UniProtKB" id="Q1XH05"/>
    </source>
</evidence>
<evidence type="ECO:0000250" key="3">
    <source>
        <dbReference type="UniProtKB" id="Q7XSK0"/>
    </source>
</evidence>
<evidence type="ECO:0000250" key="4">
    <source>
        <dbReference type="UniProtKB" id="Q9SPP9"/>
    </source>
</evidence>
<evidence type="ECO:0000255" key="5"/>
<evidence type="ECO:0000255" key="6">
    <source>
        <dbReference type="PROSITE-ProRule" id="PRU00498"/>
    </source>
</evidence>
<evidence type="ECO:0000303" key="7">
    <source>
    </source>
</evidence>
<evidence type="ECO:0000303" key="8">
    <source>
    </source>
</evidence>
<evidence type="ECO:0000305" key="9"/>
<evidence type="ECO:0000312" key="10">
    <source>
        <dbReference type="Araport" id="AT3G18070"/>
    </source>
</evidence>
<evidence type="ECO:0000312" key="11">
    <source>
        <dbReference type="EMBL" id="BAB02019.1"/>
    </source>
</evidence>
<proteinExistence type="evidence at transcript level"/>
<reference key="1">
    <citation type="journal article" date="2000" name="DNA Res.">
        <title>Structural analysis of Arabidopsis thaliana chromosome 3. II. Sequence features of the 4,251,695 bp regions covered by 90 P1, TAC and BAC clones.</title>
        <authorList>
            <person name="Kaneko T."/>
            <person name="Katoh T."/>
            <person name="Sato S."/>
            <person name="Nakamura Y."/>
            <person name="Asamizu E."/>
            <person name="Tabata S."/>
        </authorList>
    </citation>
    <scope>NUCLEOTIDE SEQUENCE [LARGE SCALE GENOMIC DNA]</scope>
    <source>
        <strain>cv. Columbia</strain>
    </source>
</reference>
<reference key="2">
    <citation type="journal article" date="2017" name="Plant J.">
        <title>Araport11: a complete reannotation of the Arabidopsis thaliana reference genome.</title>
        <authorList>
            <person name="Cheng C.Y."/>
            <person name="Krishnakumar V."/>
            <person name="Chan A.P."/>
            <person name="Thibaud-Nissen F."/>
            <person name="Schobel S."/>
            <person name="Town C.D."/>
        </authorList>
    </citation>
    <scope>GENOME REANNOTATION</scope>
    <source>
        <strain>cv. Columbia</strain>
    </source>
</reference>
<reference key="3">
    <citation type="journal article" date="2006" name="Plant Biotechnol. J.">
        <title>Simultaneous high-throughput recombinational cloning of open reading frames in closed and open configurations.</title>
        <authorList>
            <person name="Underwood B.A."/>
            <person name="Vanderhaeghen R."/>
            <person name="Whitford R."/>
            <person name="Town C.D."/>
            <person name="Hilson P."/>
        </authorList>
    </citation>
    <scope>NUCLEOTIDE SEQUENCE [LARGE SCALE MRNA] (ISOFORM 2)</scope>
    <source>
        <strain>cv. Columbia</strain>
    </source>
</reference>
<reference key="4">
    <citation type="journal article" date="2004" name="Plant Mol. Biol.">
        <title>Functional genomic analysis of Arabidopsis thaliana glycoside hydrolase family 1.</title>
        <authorList>
            <person name="Xu Z."/>
            <person name="Escamilla-Trevino L.L."/>
            <person name="Zeng L."/>
            <person name="Lalgondar M."/>
            <person name="Bevan D.R."/>
            <person name="Winkel B.S.J."/>
            <person name="Mohamed A."/>
            <person name="Cheng C.-L."/>
            <person name="Shih M.-C."/>
            <person name="Poulton J.E."/>
            <person name="Esen A."/>
        </authorList>
    </citation>
    <scope>GENE FAMILY</scope>
    <scope>NOMENCLATURE</scope>
</reference>
<gene>
    <name evidence="7" type="primary">BGLU43</name>
    <name evidence="10" type="ordered locus">At3g18070</name>
    <name evidence="11" type="ORF">MRC8.6</name>
</gene>
<sequence>MFLFLLLLSASRSGEESPSGDAVPLATGGLNRKSFPEGFLFGTATSAYQVEGETHQDGRGPSIWDAFVKIPGKIANNATAEITVDQYHRYKEDVDLMQNLNIDAYRFSISWSRIFPEGSGKINSNGVAYYNRLIDYLIEKGITPYANLYHYDLPLALEQKYQGLLSKQGRFCGLRRVLFQTFGDRVKNWMTFNEPRVVAALGYDNGIFAPGRCSEAFGNCTDGNSATEPYIVAHHLILAHAAAVQRYRQNYQEKQKGRVGILLDFVWFEPLTSSQADNDAAQRARDFHVGWFIHPIVYGEYPNTLQNIVKERLPKFTEEEVKMVKGSIDFVGINQYTTYFMSDPKISTTPKDLGYQQDWNVTFNFAKNGTPIGPRAHSEWLYNVPWGMYKALMYIEERYGNPTMILSENGMDDPGNITLTQGLNDTTRVKYYRDYLVQLKKAVDDGANLTGYFAWSLLDNFEWLSGYTSRFGIVYVDYKDLKRYPKMSALWFKQLLKRDQK</sequence>
<dbReference type="EC" id="3.2.1.21" evidence="1"/>
<dbReference type="EMBL" id="AB020749">
    <property type="protein sequence ID" value="BAB02019.1"/>
    <property type="status" value="ALT_SEQ"/>
    <property type="molecule type" value="Genomic_DNA"/>
</dbReference>
<dbReference type="EMBL" id="CP002686">
    <property type="protein sequence ID" value="AEE76042.1"/>
    <property type="molecule type" value="Genomic_DNA"/>
</dbReference>
<dbReference type="EMBL" id="CP002686">
    <property type="protein sequence ID" value="AEE76043.1"/>
    <property type="molecule type" value="Genomic_DNA"/>
</dbReference>
<dbReference type="EMBL" id="DQ446670">
    <property type="protein sequence ID" value="ABE65945.1"/>
    <property type="molecule type" value="mRNA"/>
</dbReference>
<dbReference type="RefSeq" id="NP_001078176.1">
    <molecule id="Q9LV34-2"/>
    <property type="nucleotide sequence ID" value="NM_001084707.2"/>
</dbReference>
<dbReference type="RefSeq" id="NP_001325994.1">
    <property type="nucleotide sequence ID" value="NM_001338322.1"/>
</dbReference>
<dbReference type="RefSeq" id="NP_188435.2">
    <molecule id="Q9LV34-1"/>
    <property type="nucleotide sequence ID" value="NM_112689.2"/>
</dbReference>
<dbReference type="SMR" id="Q9LV34"/>
<dbReference type="FunCoup" id="Q9LV34">
    <property type="interactions" value="411"/>
</dbReference>
<dbReference type="STRING" id="3702.Q9LV34"/>
<dbReference type="CAZy" id="GH1">
    <property type="family name" value="Glycoside Hydrolase Family 1"/>
</dbReference>
<dbReference type="GlyCosmos" id="Q9LV34">
    <property type="glycosylation" value="6 sites, No reported glycans"/>
</dbReference>
<dbReference type="GlyGen" id="Q9LV34">
    <property type="glycosylation" value="6 sites"/>
</dbReference>
<dbReference type="PaxDb" id="3702-AT3G18070.1"/>
<dbReference type="EnsemblPlants" id="AT3G18070.1">
    <molecule id="Q9LV34-1"/>
    <property type="protein sequence ID" value="AT3G18070.1"/>
    <property type="gene ID" value="AT3G18070"/>
</dbReference>
<dbReference type="EnsemblPlants" id="AT3G18070.2">
    <molecule id="Q9LV34-2"/>
    <property type="protein sequence ID" value="AT3G18070.2"/>
    <property type="gene ID" value="AT3G18070"/>
</dbReference>
<dbReference type="GeneID" id="821332"/>
<dbReference type="Gramene" id="AT3G18070.1">
    <molecule id="Q9LV34-1"/>
    <property type="protein sequence ID" value="AT3G18070.1"/>
    <property type="gene ID" value="AT3G18070"/>
</dbReference>
<dbReference type="Gramene" id="AT3G18070.2">
    <molecule id="Q9LV34-2"/>
    <property type="protein sequence ID" value="AT3G18070.2"/>
    <property type="gene ID" value="AT3G18070"/>
</dbReference>
<dbReference type="KEGG" id="ath:AT3G18070"/>
<dbReference type="Araport" id="AT3G18070"/>
<dbReference type="TAIR" id="AT3G18070">
    <property type="gene designation" value="BGLU43"/>
</dbReference>
<dbReference type="eggNOG" id="KOG0626">
    <property type="taxonomic scope" value="Eukaryota"/>
</dbReference>
<dbReference type="HOGENOM" id="CLU_001859_1_0_1"/>
<dbReference type="InParanoid" id="Q9LV34"/>
<dbReference type="OMA" id="CHACINN"/>
<dbReference type="PhylomeDB" id="Q9LV34"/>
<dbReference type="BioCyc" id="ARA:AT3G18070-MONOMER"/>
<dbReference type="PRO" id="PR:Q9LV34"/>
<dbReference type="Proteomes" id="UP000006548">
    <property type="component" value="Chromosome 3"/>
</dbReference>
<dbReference type="ExpressionAtlas" id="Q9LV34">
    <property type="expression patterns" value="baseline and differential"/>
</dbReference>
<dbReference type="GO" id="GO:0008422">
    <property type="term" value="F:beta-glucosidase activity"/>
    <property type="evidence" value="ECO:0007669"/>
    <property type="project" value="UniProtKB-EC"/>
</dbReference>
<dbReference type="GO" id="GO:0005975">
    <property type="term" value="P:carbohydrate metabolic process"/>
    <property type="evidence" value="ECO:0007669"/>
    <property type="project" value="InterPro"/>
</dbReference>
<dbReference type="FunFam" id="3.20.20.80:FF:000041">
    <property type="entry name" value="Beta-glucosidase 7"/>
    <property type="match status" value="1"/>
</dbReference>
<dbReference type="Gene3D" id="3.20.20.80">
    <property type="entry name" value="Glycosidases"/>
    <property type="match status" value="1"/>
</dbReference>
<dbReference type="InterPro" id="IPR001360">
    <property type="entry name" value="Glyco_hydro_1"/>
</dbReference>
<dbReference type="InterPro" id="IPR017853">
    <property type="entry name" value="Glycoside_hydrolase_SF"/>
</dbReference>
<dbReference type="PANTHER" id="PTHR10353:SF161">
    <property type="entry name" value="BETA-GLUCOSIDASE 43"/>
    <property type="match status" value="1"/>
</dbReference>
<dbReference type="PANTHER" id="PTHR10353">
    <property type="entry name" value="GLYCOSYL HYDROLASE"/>
    <property type="match status" value="1"/>
</dbReference>
<dbReference type="Pfam" id="PF00232">
    <property type="entry name" value="Glyco_hydro_1"/>
    <property type="match status" value="1"/>
</dbReference>
<dbReference type="PRINTS" id="PR00131">
    <property type="entry name" value="GLHYDRLASE1"/>
</dbReference>
<dbReference type="SUPFAM" id="SSF51445">
    <property type="entry name" value="(Trans)glycosidases"/>
    <property type="match status" value="1"/>
</dbReference>